<organism>
    <name type="scientific">Rattus norvegicus</name>
    <name type="common">Rat</name>
    <dbReference type="NCBI Taxonomy" id="10116"/>
    <lineage>
        <taxon>Eukaryota</taxon>
        <taxon>Metazoa</taxon>
        <taxon>Chordata</taxon>
        <taxon>Craniata</taxon>
        <taxon>Vertebrata</taxon>
        <taxon>Euteleostomi</taxon>
        <taxon>Mammalia</taxon>
        <taxon>Eutheria</taxon>
        <taxon>Euarchontoglires</taxon>
        <taxon>Glires</taxon>
        <taxon>Rodentia</taxon>
        <taxon>Myomorpha</taxon>
        <taxon>Muroidea</taxon>
        <taxon>Muridae</taxon>
        <taxon>Murinae</taxon>
        <taxon>Rattus</taxon>
    </lineage>
</organism>
<evidence type="ECO:0000250" key="1"/>
<evidence type="ECO:0000250" key="2">
    <source>
        <dbReference type="UniProtKB" id="P31513"/>
    </source>
</evidence>
<evidence type="ECO:0000250" key="3">
    <source>
        <dbReference type="UniProtKB" id="P32417"/>
    </source>
</evidence>
<evidence type="ECO:0000250" key="4">
    <source>
        <dbReference type="UniProtKB" id="P97501"/>
    </source>
</evidence>
<evidence type="ECO:0000250" key="5">
    <source>
        <dbReference type="UniProtKB" id="Q9HFE4"/>
    </source>
</evidence>
<evidence type="ECO:0000255" key="6"/>
<evidence type="ECO:0000269" key="7">
    <source>
    </source>
</evidence>
<evidence type="ECO:0000269" key="8">
    <source>
    </source>
</evidence>
<evidence type="ECO:0000269" key="9">
    <source>
    </source>
</evidence>
<evidence type="ECO:0000269" key="10">
    <source>
    </source>
</evidence>
<evidence type="ECO:0000305" key="11"/>
<evidence type="ECO:0000305" key="12">
    <source>
    </source>
</evidence>
<sequence>MKRKVAVIGAGVSGLAAIRSCLEEGLEPTCFERSDDVGGLWKFSDHTEEGRASIYQSVFTNSSKEMMCFPDFPYPDDFPNFMHNSKLQEYITSFATEKNLLKYIQFETLVTRINKCPDFSTTGKWEVTTEKNSKKETAVFDAVMICSGHHVYPHLPKDSFPGLNRFKGKCFHSRDYKEPGTWKGKRVLVIGLGNSGCDIAAELSHVAQQVIISSRSGSWVMSRVWNDGYPWDMVVITRFQTFLKNNLPTAISDWWYMKQMNARFKHENYGLMPLNGTLRKEPVFNDELPARILCGTVSIKPNVKEFTETSAVFEDGTVFEGIDCVIFATGYGYAYPFLDDSIIKSRNNEVTLYKGIFPPQLEKPTMAVIGLVQSLGAAIPTTDLQARWAAQVIRGTCILPSVNDMMDDIDEKMGKKLKWFGNSTTIQTDYIVYMDELASFIGAKPNILWLFLKDPRLAIEVFFGPCSPYQFRLVGPGKWSGARNAILTQWDRSLKPMKTRVVGGIQKPCLYSHFLRLLAVPVLIALFLVLI</sequence>
<accession>Q9EQ76</accession>
<accession>Q5PQV6</accession>
<comment type="function">
    <text evidence="2 9 10">Essential hepatic enzyme that catalyzes the oxygenation of a wide variety of nitrogen- and sulfur-containing compounds including drugs as well as dietary compounds (PubMed:3739217, PubMed:7736906). Plays an important role in the metabolism of trimethylamine (TMA), via the production of trimethylamine N-oxide (TMAO) metabolite. TMA is generated by the action of gut microbiota using dietary precursors such as choline, choline containing compounds, betaine or L-carnitine. By regulating TMAO concentration, FMO3 directly impacts both platelet responsiveness and rate of thrombus formation.</text>
</comment>
<comment type="catalytic activity">
    <reaction evidence="2">
        <text>trimethylamine + NADPH + O2 = trimethylamine N-oxide + NADP(+) + H2O</text>
        <dbReference type="Rhea" id="RHEA:31979"/>
        <dbReference type="ChEBI" id="CHEBI:15377"/>
        <dbReference type="ChEBI" id="CHEBI:15379"/>
        <dbReference type="ChEBI" id="CHEBI:15724"/>
        <dbReference type="ChEBI" id="CHEBI:57783"/>
        <dbReference type="ChEBI" id="CHEBI:58349"/>
        <dbReference type="ChEBI" id="CHEBI:58389"/>
        <dbReference type="EC" id="1.14.13.148"/>
    </reaction>
    <physiologicalReaction direction="left-to-right" evidence="2">
        <dbReference type="Rhea" id="RHEA:31980"/>
    </physiologicalReaction>
</comment>
<comment type="catalytic activity">
    <reaction evidence="2">
        <text>N,N-dimethylaniline + NADPH + O2 + H(+) = N,N-dimethylaniline N-oxide + NADP(+) + H2O</text>
        <dbReference type="Rhea" id="RHEA:24468"/>
        <dbReference type="ChEBI" id="CHEBI:15377"/>
        <dbReference type="ChEBI" id="CHEBI:15378"/>
        <dbReference type="ChEBI" id="CHEBI:15379"/>
        <dbReference type="ChEBI" id="CHEBI:16269"/>
        <dbReference type="ChEBI" id="CHEBI:17735"/>
        <dbReference type="ChEBI" id="CHEBI:57783"/>
        <dbReference type="ChEBI" id="CHEBI:58349"/>
        <dbReference type="EC" id="1.14.13.8"/>
    </reaction>
    <physiologicalReaction direction="left-to-right" evidence="2">
        <dbReference type="Rhea" id="RHEA:24469"/>
    </physiologicalReaction>
</comment>
<comment type="catalytic activity">
    <reaction evidence="2">
        <text>hypotaurine + NADPH + O2 + H(+) = taurine + NADP(+) + H2O</text>
        <dbReference type="Rhea" id="RHEA:69819"/>
        <dbReference type="ChEBI" id="CHEBI:15377"/>
        <dbReference type="ChEBI" id="CHEBI:15378"/>
        <dbReference type="ChEBI" id="CHEBI:15379"/>
        <dbReference type="ChEBI" id="CHEBI:57783"/>
        <dbReference type="ChEBI" id="CHEBI:57853"/>
        <dbReference type="ChEBI" id="CHEBI:58349"/>
        <dbReference type="ChEBI" id="CHEBI:507393"/>
        <dbReference type="EC" id="1.14.13.8"/>
    </reaction>
    <physiologicalReaction direction="left-to-right" evidence="2">
        <dbReference type="Rhea" id="RHEA:69820"/>
    </physiologicalReaction>
</comment>
<comment type="catalytic activity">
    <reaction evidence="2">
        <text>(S)-nicotine + NADPH + O2 = trans-(S)-nicotine N(1')-oxide + NADP(+) + H2O</text>
        <dbReference type="Rhea" id="RHEA:58720"/>
        <dbReference type="ChEBI" id="CHEBI:15377"/>
        <dbReference type="ChEBI" id="CHEBI:15379"/>
        <dbReference type="ChEBI" id="CHEBI:57783"/>
        <dbReference type="ChEBI" id="CHEBI:58349"/>
        <dbReference type="ChEBI" id="CHEBI:59806"/>
        <dbReference type="ChEBI" id="CHEBI:142660"/>
    </reaction>
    <physiologicalReaction direction="left-to-right" evidence="2">
        <dbReference type="Rhea" id="RHEA:58721"/>
    </physiologicalReaction>
</comment>
<comment type="catalytic activity">
    <reaction evidence="9 10">
        <text>albendazole + NADPH + O2 + H(+) = albendazole S-oxide + NADP(+) + H2O</text>
        <dbReference type="Rhea" id="RHEA:10796"/>
        <dbReference type="ChEBI" id="CHEBI:15377"/>
        <dbReference type="ChEBI" id="CHEBI:15378"/>
        <dbReference type="ChEBI" id="CHEBI:15379"/>
        <dbReference type="ChEBI" id="CHEBI:16664"/>
        <dbReference type="ChEBI" id="CHEBI:16959"/>
        <dbReference type="ChEBI" id="CHEBI:57783"/>
        <dbReference type="ChEBI" id="CHEBI:58349"/>
        <dbReference type="EC" id="1.14.13.32"/>
    </reaction>
    <physiologicalReaction direction="left-to-right" evidence="12">
        <dbReference type="Rhea" id="RHEA:10797"/>
    </physiologicalReaction>
</comment>
<comment type="cofactor">
    <cofactor evidence="1">
        <name>FAD</name>
        <dbReference type="ChEBI" id="CHEBI:57692"/>
    </cofactor>
</comment>
<comment type="subcellular location">
    <subcellularLocation>
        <location evidence="8">Microsome membrane</location>
        <topology evidence="6">Single-pass membrane protein</topology>
    </subcellularLocation>
    <subcellularLocation>
        <location evidence="3">Endoplasmic reticulum membrane</location>
        <topology evidence="6">Single-pass membrane protein</topology>
    </subcellularLocation>
</comment>
<comment type="tissue specificity">
    <text evidence="7 8">Detected in liver and kidney (at protein level) (PubMed:19307449). Expressed in kidney and liver. Weakly expressed in lung. Does not seem to be expressed in brain, adipose tissue, or muscle.</text>
</comment>
<comment type="similarity">
    <text evidence="11">Belongs to the FMO family.</text>
</comment>
<name>FMO3_RAT</name>
<proteinExistence type="evidence at protein level"/>
<reference key="1">
    <citation type="journal article" date="2001" name="Arch. Biochem. Biophys.">
        <title>Cloning, sequencing, tissue distribution, and heterologous expression of rat flavin-containing monooxygenase 3.</title>
        <authorList>
            <person name="Lattard V."/>
            <person name="Buronfosse T."/>
            <person name="Lachuer J."/>
            <person name="Longin-Sauvageon C."/>
            <person name="Moulin C."/>
            <person name="Benoit E."/>
        </authorList>
    </citation>
    <scope>NUCLEOTIDE SEQUENCE [MRNA]</scope>
    <scope>CHARACTERIZATION</scope>
    <scope>TISSUE SPECIFICITY</scope>
    <source>
        <strain>Sprague-Dawley</strain>
    </source>
</reference>
<reference key="2">
    <citation type="journal article" date="2004" name="Genome Res.">
        <title>The status, quality, and expansion of the NIH full-length cDNA project: the Mammalian Gene Collection (MGC).</title>
        <authorList>
            <consortium name="The MGC Project Team"/>
        </authorList>
    </citation>
    <scope>NUCLEOTIDE SEQUENCE [LARGE SCALE MRNA]</scope>
    <source>
        <tissue>Kidney</tissue>
    </source>
</reference>
<reference key="3">
    <citation type="journal article" date="1986" name="Vet. Res. Commun.">
        <title>Sulfoxidation of albendazole by a cytochrome P450-independent monooxygenase from rat liver microsomes.</title>
        <authorList>
            <person name="Fargetton X."/>
            <person name="Galtier P."/>
            <person name="Delatour P."/>
        </authorList>
    </citation>
    <scope>FUNCTION</scope>
    <scope>CATALYTIC ACTIVITY</scope>
</reference>
<reference key="4">
    <citation type="journal article" date="1995" name="Drug Metab. Dispos.">
        <title>Chiral sulfoxidation of albendazole by the flavin adenine dinucleotide-containing and cytochrome P450-dependent monooxygenases from rat liver microsomes.</title>
        <authorList>
            <person name="Moroni P."/>
            <person name="Buronfosse T."/>
            <person name="Longin-Sauvageon C."/>
            <person name="Delatour P."/>
            <person name="Benoit E."/>
        </authorList>
    </citation>
    <scope>FUNCTION</scope>
    <scope>CATALYTIC ACTIVITY</scope>
</reference>
<reference key="5">
    <citation type="journal article" date="2009" name="J. Pharmacol. Exp. Ther.">
        <title>Differential localization of flavin-containing monooxygenase (FMO) isoforms 1, 3, and 4 in rat liver and kidney and evidence for expression of FMO4 in mouse, rat, and human liver and kidney microsomes.</title>
        <authorList>
            <person name="Novick R.M."/>
            <person name="Mitzey A.M."/>
            <person name="Brownfield M.S."/>
            <person name="Elfarra A.A."/>
        </authorList>
    </citation>
    <scope>SUBCELLULAR LOCATION</scope>
    <scope>TISSUE SPECIFICITY</scope>
</reference>
<dbReference type="EC" id="1.14.13.148" evidence="2"/>
<dbReference type="EC" id="1.14.13.32" evidence="9 10"/>
<dbReference type="EC" id="1.14.13.8" evidence="2"/>
<dbReference type="EMBL" id="AF286595">
    <property type="protein sequence ID" value="AAG44891.1"/>
    <property type="molecule type" value="mRNA"/>
</dbReference>
<dbReference type="EMBL" id="BC087008">
    <property type="protein sequence ID" value="AAH87008.1"/>
    <property type="molecule type" value="mRNA"/>
</dbReference>
<dbReference type="RefSeq" id="NP_445885.2">
    <property type="nucleotide sequence ID" value="NM_053433.2"/>
</dbReference>
<dbReference type="SMR" id="Q9EQ76"/>
<dbReference type="FunCoup" id="Q9EQ76">
    <property type="interactions" value="70"/>
</dbReference>
<dbReference type="IntAct" id="Q9EQ76">
    <property type="interactions" value="1"/>
</dbReference>
<dbReference type="STRING" id="10116.ENSRNOP00000004864"/>
<dbReference type="CarbonylDB" id="Q9EQ76"/>
<dbReference type="iPTMnet" id="Q9EQ76"/>
<dbReference type="PhosphoSitePlus" id="Q9EQ76"/>
<dbReference type="PaxDb" id="10116-ENSRNOP00000004864"/>
<dbReference type="GeneID" id="84493"/>
<dbReference type="KEGG" id="rno:84493"/>
<dbReference type="UCSC" id="RGD:619761">
    <property type="organism name" value="rat"/>
</dbReference>
<dbReference type="AGR" id="RGD:619761"/>
<dbReference type="CTD" id="2328"/>
<dbReference type="RGD" id="619761">
    <property type="gene designation" value="Fmo3"/>
</dbReference>
<dbReference type="eggNOG" id="KOG1399">
    <property type="taxonomic scope" value="Eukaryota"/>
</dbReference>
<dbReference type="InParanoid" id="Q9EQ76"/>
<dbReference type="OrthoDB" id="66881at2759"/>
<dbReference type="PhylomeDB" id="Q9EQ76"/>
<dbReference type="TreeFam" id="TF105285"/>
<dbReference type="BRENDA" id="1.14.13.8">
    <property type="organism ID" value="5301"/>
</dbReference>
<dbReference type="Reactome" id="R-RNO-217271">
    <property type="pathway name" value="FMO oxidises nucleophiles"/>
</dbReference>
<dbReference type="SABIO-RK" id="Q9EQ76"/>
<dbReference type="PRO" id="PR:Q9EQ76"/>
<dbReference type="Proteomes" id="UP000002494">
    <property type="component" value="Unplaced"/>
</dbReference>
<dbReference type="GO" id="GO:0005789">
    <property type="term" value="C:endoplasmic reticulum membrane"/>
    <property type="evidence" value="ECO:0007669"/>
    <property type="project" value="UniProtKB-SubCell"/>
</dbReference>
<dbReference type="GO" id="GO:0047638">
    <property type="term" value="F:albendazole monooxygenase activity"/>
    <property type="evidence" value="ECO:0007669"/>
    <property type="project" value="RHEA"/>
</dbReference>
<dbReference type="GO" id="GO:0016597">
    <property type="term" value="F:amino acid binding"/>
    <property type="evidence" value="ECO:0000353"/>
    <property type="project" value="RGD"/>
</dbReference>
<dbReference type="GO" id="GO:0050660">
    <property type="term" value="F:flavin adenine dinucleotide binding"/>
    <property type="evidence" value="ECO:0007669"/>
    <property type="project" value="InterPro"/>
</dbReference>
<dbReference type="GO" id="GO:0047822">
    <property type="term" value="F:hypotaurine monooxygenase activity"/>
    <property type="evidence" value="ECO:0000266"/>
    <property type="project" value="RGD"/>
</dbReference>
<dbReference type="GO" id="GO:0004497">
    <property type="term" value="F:monooxygenase activity"/>
    <property type="evidence" value="ECO:0000304"/>
    <property type="project" value="RGD"/>
</dbReference>
<dbReference type="GO" id="GO:0004499">
    <property type="term" value="F:N,N-dimethylaniline monooxygenase activity"/>
    <property type="evidence" value="ECO:0000314"/>
    <property type="project" value="RGD"/>
</dbReference>
<dbReference type="GO" id="GO:0050661">
    <property type="term" value="F:NADP binding"/>
    <property type="evidence" value="ECO:0000353"/>
    <property type="project" value="RGD"/>
</dbReference>
<dbReference type="GO" id="GO:0034899">
    <property type="term" value="F:trimethylamine monooxygenase activity"/>
    <property type="evidence" value="ECO:0007669"/>
    <property type="project" value="UniProtKB-EC"/>
</dbReference>
<dbReference type="GO" id="GO:0042412">
    <property type="term" value="P:taurine biosynthetic process"/>
    <property type="evidence" value="ECO:0000266"/>
    <property type="project" value="RGD"/>
</dbReference>
<dbReference type="GO" id="GO:0006805">
    <property type="term" value="P:xenobiotic metabolic process"/>
    <property type="evidence" value="ECO:0000314"/>
    <property type="project" value="RGD"/>
</dbReference>
<dbReference type="FunFam" id="3.50.50.60:FF:000023">
    <property type="entry name" value="Dimethylaniline monooxygenase [N-oxide-forming]"/>
    <property type="match status" value="1"/>
</dbReference>
<dbReference type="FunFam" id="3.50.50.60:FF:000073">
    <property type="entry name" value="Dimethylaniline monooxygenase [N-oxide-forming]"/>
    <property type="match status" value="1"/>
</dbReference>
<dbReference type="FunFam" id="3.50.50.60:FF:000279">
    <property type="entry name" value="Dimethylaniline monooxygenase [N-oxide-forming]"/>
    <property type="match status" value="1"/>
</dbReference>
<dbReference type="FunFam" id="3.50.50.60:FF:000454">
    <property type="entry name" value="Dimethylaniline monooxygenase [N-oxide-forming]"/>
    <property type="match status" value="1"/>
</dbReference>
<dbReference type="Gene3D" id="3.50.50.60">
    <property type="entry name" value="FAD/NAD(P)-binding domain"/>
    <property type="match status" value="3"/>
</dbReference>
<dbReference type="InterPro" id="IPR036188">
    <property type="entry name" value="FAD/NAD-bd_sf"/>
</dbReference>
<dbReference type="InterPro" id="IPR000960">
    <property type="entry name" value="Flavin_mOase"/>
</dbReference>
<dbReference type="InterPro" id="IPR020946">
    <property type="entry name" value="Flavin_mOase-like"/>
</dbReference>
<dbReference type="InterPro" id="IPR002255">
    <property type="entry name" value="Flavin_mOase_3"/>
</dbReference>
<dbReference type="InterPro" id="IPR050346">
    <property type="entry name" value="FMO-like"/>
</dbReference>
<dbReference type="PANTHER" id="PTHR23023">
    <property type="entry name" value="DIMETHYLANILINE MONOOXYGENASE"/>
    <property type="match status" value="1"/>
</dbReference>
<dbReference type="Pfam" id="PF00743">
    <property type="entry name" value="FMO-like"/>
    <property type="match status" value="1"/>
</dbReference>
<dbReference type="PIRSF" id="PIRSF000332">
    <property type="entry name" value="FMO"/>
    <property type="match status" value="1"/>
</dbReference>
<dbReference type="PRINTS" id="PR00370">
    <property type="entry name" value="FMOXYGENASE"/>
</dbReference>
<dbReference type="PRINTS" id="PR01123">
    <property type="entry name" value="FMOXYGENASE3"/>
</dbReference>
<dbReference type="SUPFAM" id="SSF51905">
    <property type="entry name" value="FAD/NAD(P)-binding domain"/>
    <property type="match status" value="2"/>
</dbReference>
<gene>
    <name type="primary">Fmo3</name>
</gene>
<keyword id="KW-0256">Endoplasmic reticulum</keyword>
<keyword id="KW-0274">FAD</keyword>
<keyword id="KW-0285">Flavoprotein</keyword>
<keyword id="KW-0472">Membrane</keyword>
<keyword id="KW-0492">Microsome</keyword>
<keyword id="KW-0503">Monooxygenase</keyword>
<keyword id="KW-0521">NADP</keyword>
<keyword id="KW-0560">Oxidoreductase</keyword>
<keyword id="KW-0597">Phosphoprotein</keyword>
<keyword id="KW-1185">Reference proteome</keyword>
<keyword id="KW-0812">Transmembrane</keyword>
<keyword id="KW-1133">Transmembrane helix</keyword>
<feature type="chain" id="PRO_0000147659" description="Flavin-containing monooxygenase 3">
    <location>
        <begin position="1"/>
        <end position="531"/>
    </location>
</feature>
<feature type="transmembrane region" description="Helical" evidence="6">
    <location>
        <begin position="511"/>
        <end position="531"/>
    </location>
</feature>
<feature type="binding site" evidence="5">
    <location>
        <begin position="9"/>
        <end position="13"/>
    </location>
    <ligand>
        <name>FAD</name>
        <dbReference type="ChEBI" id="CHEBI:57692"/>
    </ligand>
</feature>
<feature type="binding site" evidence="5">
    <location>
        <position position="32"/>
    </location>
    <ligand>
        <name>FAD</name>
        <dbReference type="ChEBI" id="CHEBI:57692"/>
    </ligand>
</feature>
<feature type="binding site" evidence="5">
    <location>
        <begin position="40"/>
        <end position="41"/>
    </location>
    <ligand>
        <name>FAD</name>
        <dbReference type="ChEBI" id="CHEBI:57692"/>
    </ligand>
</feature>
<feature type="binding site" evidence="5">
    <location>
        <begin position="60"/>
        <end position="61"/>
    </location>
    <ligand>
        <name>NADP(+)</name>
        <dbReference type="ChEBI" id="CHEBI:58349"/>
    </ligand>
</feature>
<feature type="binding site" evidence="5">
    <location>
        <begin position="61"/>
        <end position="62"/>
    </location>
    <ligand>
        <name>FAD</name>
        <dbReference type="ChEBI" id="CHEBI:57692"/>
    </ligand>
</feature>
<feature type="binding site" evidence="5">
    <location>
        <begin position="195"/>
        <end position="198"/>
    </location>
    <ligand>
        <name>NADP(+)</name>
        <dbReference type="ChEBI" id="CHEBI:58349"/>
    </ligand>
</feature>
<feature type="modified residue" description="Phosphoserine" evidence="4">
    <location>
        <position position="401"/>
    </location>
</feature>
<feature type="sequence conflict" description="In Ref. 2; AAH87008." evidence="11" ref="2">
    <original>V</original>
    <variation>D</variation>
    <location>
        <position position="501"/>
    </location>
</feature>
<protein>
    <recommendedName>
        <fullName evidence="2">Flavin-containing monooxygenase 3</fullName>
        <ecNumber evidence="2">1.14.13.148</ecNumber>
        <ecNumber evidence="9 10">1.14.13.32</ecNumber>
        <ecNumber evidence="2">1.14.13.8</ecNumber>
    </recommendedName>
    <alternativeName>
        <fullName>Dimethylaniline monooxygenase [N-oxide-forming] 3</fullName>
    </alternativeName>
    <alternativeName>
        <fullName>Dimethylaniline oxidase 3</fullName>
    </alternativeName>
    <alternativeName>
        <fullName>Hepatic flavin-containing monooxygenase 3</fullName>
        <shortName>FMO 3</shortName>
    </alternativeName>
    <alternativeName>
        <fullName>Trimethylamine monooxygenase</fullName>
    </alternativeName>
</protein>